<proteinExistence type="inferred from homology"/>
<keyword id="KW-0276">Fatty acid metabolism</keyword>
<keyword id="KW-0443">Lipid metabolism</keyword>
<keyword id="KW-0511">Multifunctional enzyme</keyword>
<keyword id="KW-0521">NADP</keyword>
<keyword id="KW-0560">Oxidoreductase</keyword>
<keyword id="KW-0596">Phosphopantetheine</keyword>
<keyword id="KW-0597">Phosphoprotein</keyword>
<keyword id="KW-1185">Reference proteome</keyword>
<keyword id="KW-0808">Transferase</keyword>
<organism>
    <name type="scientific">Mycobacterium tuberculosis (strain CDC 1551 / Oshkosh)</name>
    <dbReference type="NCBI Taxonomy" id="83331"/>
    <lineage>
        <taxon>Bacteria</taxon>
        <taxon>Bacillati</taxon>
        <taxon>Actinomycetota</taxon>
        <taxon>Actinomycetes</taxon>
        <taxon>Mycobacteriales</taxon>
        <taxon>Mycobacteriaceae</taxon>
        <taxon>Mycobacterium</taxon>
        <taxon>Mycobacterium tuberculosis complex</taxon>
    </lineage>
</organism>
<gene>
    <name type="primary">ppsD</name>
    <name type="ordered locus">MT3004</name>
</gene>
<dbReference type="EC" id="2.3.1.292" evidence="2"/>
<dbReference type="EMBL" id="AE000516">
    <property type="protein sequence ID" value="AAK47331.1"/>
    <property type="molecule type" value="Genomic_DNA"/>
</dbReference>
<dbReference type="PIR" id="B70984">
    <property type="entry name" value="B70984"/>
</dbReference>
<dbReference type="RefSeq" id="WP_003899549.1">
    <property type="nucleotide sequence ID" value="NZ_KK341227.1"/>
</dbReference>
<dbReference type="SMR" id="P9WQE2"/>
<dbReference type="KEGG" id="mtc:MT3004"/>
<dbReference type="PATRIC" id="fig|83331.31.peg.3244"/>
<dbReference type="HOGENOM" id="CLU_000022_35_2_11"/>
<dbReference type="UniPathway" id="UPA00094"/>
<dbReference type="Proteomes" id="UP000001020">
    <property type="component" value="Chromosome"/>
</dbReference>
<dbReference type="GO" id="GO:0005886">
    <property type="term" value="C:plasma membrane"/>
    <property type="evidence" value="ECO:0007669"/>
    <property type="project" value="TreeGrafter"/>
</dbReference>
<dbReference type="GO" id="GO:0034081">
    <property type="term" value="C:polyketide synthase complex"/>
    <property type="evidence" value="ECO:0000250"/>
    <property type="project" value="UniProtKB"/>
</dbReference>
<dbReference type="GO" id="GO:0004315">
    <property type="term" value="F:3-oxoacyl-[acyl-carrier-protein] synthase activity"/>
    <property type="evidence" value="ECO:0007669"/>
    <property type="project" value="InterPro"/>
</dbReference>
<dbReference type="GO" id="GO:0004312">
    <property type="term" value="F:fatty acid synthase activity"/>
    <property type="evidence" value="ECO:0007669"/>
    <property type="project" value="TreeGrafter"/>
</dbReference>
<dbReference type="GO" id="GO:0016491">
    <property type="term" value="F:oxidoreductase activity"/>
    <property type="evidence" value="ECO:0007669"/>
    <property type="project" value="UniProtKB-KW"/>
</dbReference>
<dbReference type="GO" id="GO:0031177">
    <property type="term" value="F:phosphopantetheine binding"/>
    <property type="evidence" value="ECO:0007669"/>
    <property type="project" value="InterPro"/>
</dbReference>
<dbReference type="GO" id="GO:0071766">
    <property type="term" value="P:Actinobacterium-type cell wall biogenesis"/>
    <property type="evidence" value="ECO:0000250"/>
    <property type="project" value="UniProtKB"/>
</dbReference>
<dbReference type="GO" id="GO:0071770">
    <property type="term" value="P:DIM/DIP cell wall layer assembly"/>
    <property type="evidence" value="ECO:0007669"/>
    <property type="project" value="TreeGrafter"/>
</dbReference>
<dbReference type="GO" id="GO:0006633">
    <property type="term" value="P:fatty acid biosynthetic process"/>
    <property type="evidence" value="ECO:0007669"/>
    <property type="project" value="UniProtKB-UniPathway"/>
</dbReference>
<dbReference type="GO" id="GO:0097041">
    <property type="term" value="P:phenolic phthiocerol biosynthetic process"/>
    <property type="evidence" value="ECO:0000250"/>
    <property type="project" value="UniProtKB"/>
</dbReference>
<dbReference type="GO" id="GO:0097040">
    <property type="term" value="P:phthiocerol biosynthetic process"/>
    <property type="evidence" value="ECO:0000250"/>
    <property type="project" value="UniProtKB"/>
</dbReference>
<dbReference type="CDD" id="cd08955">
    <property type="entry name" value="KR_2_FAS_SDR_x"/>
    <property type="match status" value="1"/>
</dbReference>
<dbReference type="CDD" id="cd00833">
    <property type="entry name" value="PKS"/>
    <property type="match status" value="1"/>
</dbReference>
<dbReference type="FunFam" id="3.30.70.250:FF:000003">
    <property type="entry name" value="Polyketide beta-ketoacyl synthase Pks3"/>
    <property type="match status" value="1"/>
</dbReference>
<dbReference type="FunFam" id="3.40.47.10:FF:000019">
    <property type="entry name" value="Polyketide synthase type I"/>
    <property type="match status" value="1"/>
</dbReference>
<dbReference type="Gene3D" id="3.40.47.10">
    <property type="match status" value="1"/>
</dbReference>
<dbReference type="Gene3D" id="1.10.1200.10">
    <property type="entry name" value="ACP-like"/>
    <property type="match status" value="1"/>
</dbReference>
<dbReference type="Gene3D" id="3.30.70.250">
    <property type="entry name" value="Malonyl-CoA ACP transacylase, ACP-binding"/>
    <property type="match status" value="1"/>
</dbReference>
<dbReference type="Gene3D" id="3.40.366.10">
    <property type="entry name" value="Malonyl-Coenzyme A Acyl Carrier Protein, domain 2"/>
    <property type="match status" value="1"/>
</dbReference>
<dbReference type="Gene3D" id="3.40.50.720">
    <property type="entry name" value="NAD(P)-binding Rossmann-like Domain"/>
    <property type="match status" value="1"/>
</dbReference>
<dbReference type="Gene3D" id="3.10.129.110">
    <property type="entry name" value="Polyketide synthase dehydratase"/>
    <property type="match status" value="1"/>
</dbReference>
<dbReference type="InterPro" id="IPR001227">
    <property type="entry name" value="Ac_transferase_dom_sf"/>
</dbReference>
<dbReference type="InterPro" id="IPR036736">
    <property type="entry name" value="ACP-like_sf"/>
</dbReference>
<dbReference type="InterPro" id="IPR014043">
    <property type="entry name" value="Acyl_transferase_dom"/>
</dbReference>
<dbReference type="InterPro" id="IPR016035">
    <property type="entry name" value="Acyl_Trfase/lysoPLipase"/>
</dbReference>
<dbReference type="InterPro" id="IPR018201">
    <property type="entry name" value="Ketoacyl_synth_AS"/>
</dbReference>
<dbReference type="InterPro" id="IPR014031">
    <property type="entry name" value="Ketoacyl_synth_C"/>
</dbReference>
<dbReference type="InterPro" id="IPR014030">
    <property type="entry name" value="Ketoacyl_synth_N"/>
</dbReference>
<dbReference type="InterPro" id="IPR016036">
    <property type="entry name" value="Malonyl_transacylase_ACP-bd"/>
</dbReference>
<dbReference type="InterPro" id="IPR036291">
    <property type="entry name" value="NAD(P)-bd_dom_sf"/>
</dbReference>
<dbReference type="InterPro" id="IPR032821">
    <property type="entry name" value="PKS_assoc"/>
</dbReference>
<dbReference type="InterPro" id="IPR020841">
    <property type="entry name" value="PKS_Beta-ketoAc_synthase_dom"/>
</dbReference>
<dbReference type="InterPro" id="IPR042104">
    <property type="entry name" value="PKS_dehydratase_sf"/>
</dbReference>
<dbReference type="InterPro" id="IPR020807">
    <property type="entry name" value="PKS_DH"/>
</dbReference>
<dbReference type="InterPro" id="IPR049551">
    <property type="entry name" value="PKS_DH_C"/>
</dbReference>
<dbReference type="InterPro" id="IPR049552">
    <property type="entry name" value="PKS_DH_N"/>
</dbReference>
<dbReference type="InterPro" id="IPR013968">
    <property type="entry name" value="PKS_KR"/>
</dbReference>
<dbReference type="InterPro" id="IPR049900">
    <property type="entry name" value="PKS_mFAS_DH"/>
</dbReference>
<dbReference type="InterPro" id="IPR050091">
    <property type="entry name" value="PKS_NRPS_Biosynth_Enz"/>
</dbReference>
<dbReference type="InterPro" id="IPR020806">
    <property type="entry name" value="PKS_PP-bd"/>
</dbReference>
<dbReference type="InterPro" id="IPR009081">
    <property type="entry name" value="PP-bd_ACP"/>
</dbReference>
<dbReference type="InterPro" id="IPR006162">
    <property type="entry name" value="Ppantetheine_attach_site"/>
</dbReference>
<dbReference type="InterPro" id="IPR016039">
    <property type="entry name" value="Thiolase-like"/>
</dbReference>
<dbReference type="PANTHER" id="PTHR43775">
    <property type="entry name" value="FATTY ACID SYNTHASE"/>
    <property type="match status" value="1"/>
</dbReference>
<dbReference type="PANTHER" id="PTHR43775:SF37">
    <property type="entry name" value="SI:DKEY-61P9.11"/>
    <property type="match status" value="1"/>
</dbReference>
<dbReference type="Pfam" id="PF00698">
    <property type="entry name" value="Acyl_transf_1"/>
    <property type="match status" value="1"/>
</dbReference>
<dbReference type="Pfam" id="PF16197">
    <property type="entry name" value="KAsynt_C_assoc"/>
    <property type="match status" value="1"/>
</dbReference>
<dbReference type="Pfam" id="PF00109">
    <property type="entry name" value="ketoacyl-synt"/>
    <property type="match status" value="1"/>
</dbReference>
<dbReference type="Pfam" id="PF02801">
    <property type="entry name" value="Ketoacyl-synt_C"/>
    <property type="match status" value="1"/>
</dbReference>
<dbReference type="Pfam" id="PF08659">
    <property type="entry name" value="KR"/>
    <property type="match status" value="1"/>
</dbReference>
<dbReference type="Pfam" id="PF21089">
    <property type="entry name" value="PKS_DH_N"/>
    <property type="match status" value="1"/>
</dbReference>
<dbReference type="Pfam" id="PF00550">
    <property type="entry name" value="PP-binding"/>
    <property type="match status" value="1"/>
</dbReference>
<dbReference type="Pfam" id="PF14765">
    <property type="entry name" value="PS-DH"/>
    <property type="match status" value="1"/>
</dbReference>
<dbReference type="SMART" id="SM00827">
    <property type="entry name" value="PKS_AT"/>
    <property type="match status" value="1"/>
</dbReference>
<dbReference type="SMART" id="SM00826">
    <property type="entry name" value="PKS_DH"/>
    <property type="match status" value="1"/>
</dbReference>
<dbReference type="SMART" id="SM00822">
    <property type="entry name" value="PKS_KR"/>
    <property type="match status" value="1"/>
</dbReference>
<dbReference type="SMART" id="SM00825">
    <property type="entry name" value="PKS_KS"/>
    <property type="match status" value="1"/>
</dbReference>
<dbReference type="SMART" id="SM00823">
    <property type="entry name" value="PKS_PP"/>
    <property type="match status" value="1"/>
</dbReference>
<dbReference type="SUPFAM" id="SSF47336">
    <property type="entry name" value="ACP-like"/>
    <property type="match status" value="1"/>
</dbReference>
<dbReference type="SUPFAM" id="SSF52151">
    <property type="entry name" value="FabD/lysophospholipase-like"/>
    <property type="match status" value="1"/>
</dbReference>
<dbReference type="SUPFAM" id="SSF51735">
    <property type="entry name" value="NAD(P)-binding Rossmann-fold domains"/>
    <property type="match status" value="2"/>
</dbReference>
<dbReference type="SUPFAM" id="SSF55048">
    <property type="entry name" value="Probable ACP-binding domain of malonyl-CoA ACP transacylase"/>
    <property type="match status" value="1"/>
</dbReference>
<dbReference type="SUPFAM" id="SSF53901">
    <property type="entry name" value="Thiolase-like"/>
    <property type="match status" value="1"/>
</dbReference>
<dbReference type="PROSITE" id="PS50075">
    <property type="entry name" value="CARRIER"/>
    <property type="match status" value="1"/>
</dbReference>
<dbReference type="PROSITE" id="PS00606">
    <property type="entry name" value="KS3_1"/>
    <property type="match status" value="1"/>
</dbReference>
<dbReference type="PROSITE" id="PS52004">
    <property type="entry name" value="KS3_2"/>
    <property type="match status" value="1"/>
</dbReference>
<dbReference type="PROSITE" id="PS00012">
    <property type="entry name" value="PHOSPHOPANTETHEINE"/>
    <property type="match status" value="1"/>
</dbReference>
<dbReference type="PROSITE" id="PS52019">
    <property type="entry name" value="PKS_MFAS_DH"/>
    <property type="match status" value="1"/>
</dbReference>
<accession>P9WQE2</accession>
<accession>L0TDZ9</accession>
<accession>P96203</accession>
<accession>Q7D6F0</accession>
<protein>
    <recommendedName>
        <fullName evidence="8">Phenolphthiocerol/phthiocerol polyketide synthase subunit C</fullName>
        <ecNumber evidence="2">2.3.1.292</ecNumber>
    </recommendedName>
    <alternativeName>
        <fullName>(Phenol)carboxyphthiodiolenone synthase subunit D</fullName>
    </alternativeName>
    <alternativeName>
        <fullName>Beta-ketoacyl-acyl-carrier-protein synthase I</fullName>
    </alternativeName>
    <alternativeName>
        <fullName>Phthiocerol synthesis polyketide synthase type I PpsD</fullName>
    </alternativeName>
</protein>
<feature type="chain" id="PRO_0000426791" description="Phenolphthiocerol/phthiocerol polyketide synthase subunit C">
    <location>
        <begin position="1"/>
        <end position="1827"/>
    </location>
</feature>
<feature type="domain" description="Ketosynthase family 3 (KS3)" evidence="4">
    <location>
        <begin position="35"/>
        <end position="461"/>
    </location>
</feature>
<feature type="domain" description="PKS/mFAS DH" evidence="5">
    <location>
        <begin position="910"/>
        <end position="1198"/>
    </location>
</feature>
<feature type="domain" description="Carrier" evidence="3">
    <location>
        <begin position="1706"/>
        <end position="1785"/>
    </location>
</feature>
<feature type="region of interest" description="Acyltransferase" evidence="1">
    <location>
        <begin position="566"/>
        <end position="876"/>
    </location>
</feature>
<feature type="region of interest" description="Dehydratase" evidence="1">
    <location>
        <begin position="910"/>
        <end position="1076"/>
    </location>
</feature>
<feature type="region of interest" description="N-terminal hotdog fold" evidence="5">
    <location>
        <begin position="910"/>
        <end position="1037"/>
    </location>
</feature>
<feature type="region of interest" description="C-terminal hotdog fold" evidence="5">
    <location>
        <begin position="1050"/>
        <end position="1198"/>
    </location>
</feature>
<feature type="region of interest" description="Beta-ketoacyl reductase" evidence="1">
    <location>
        <begin position="1439"/>
        <end position="1617"/>
    </location>
</feature>
<feature type="region of interest" description="Disordered" evidence="7">
    <location>
        <begin position="1807"/>
        <end position="1827"/>
    </location>
</feature>
<feature type="compositionally biased region" description="Basic residues" evidence="7">
    <location>
        <begin position="1807"/>
        <end position="1820"/>
    </location>
</feature>
<feature type="active site" description="For beta-ketoacyl synthase activity" evidence="4">
    <location>
        <position position="207"/>
    </location>
</feature>
<feature type="active site" description="For beta-ketoacyl synthase activity" evidence="4">
    <location>
        <position position="342"/>
    </location>
</feature>
<feature type="active site" description="For beta-ketoacyl synthase activity" evidence="4">
    <location>
        <position position="383"/>
    </location>
</feature>
<feature type="active site" description="For malonyltransferase activity" evidence="6">
    <location>
        <position position="654"/>
    </location>
</feature>
<feature type="active site" description="Proton acceptor; for dehydratase activity" evidence="5">
    <location>
        <position position="942"/>
    </location>
</feature>
<feature type="active site" description="Proton donor; for dehydratase activity" evidence="5">
    <location>
        <position position="1111"/>
    </location>
</feature>
<feature type="binding site" evidence="1">
    <location>
        <begin position="1440"/>
        <end position="1485"/>
    </location>
    <ligand>
        <name>NADP(+)</name>
        <dbReference type="ChEBI" id="CHEBI:58349"/>
    </ligand>
</feature>
<feature type="modified residue" description="O-(pantetheine 4'-phosphoryl)serine" evidence="3">
    <location>
        <position position="1745"/>
    </location>
</feature>
<sequence length="1827" mass="193315">MTSLAERAAQLSPNARAALARELVRAGTTFPTDICEPVAVVGIGCRFPGNVTGPESFWQLLADGVDTIEQVPPDRWDADAFYDPDPSASGRMTTKWGGFVSDVDAFDADFFGITPREAVAMDPQHRMLLEVAWEALEHAGIPPDSLSGTRTGVMMGLSSWDYTIVNIERRADIDAYLSTGTPHCAAVGRIAYLLGLRGPAVAVDTACSSSLVAIHLACQSLRLRETDVALAGGVQLTLSPFTAIALSKWSALSPTGRCNSFDANADGFVRGEGCGVVVLKRLADAVRDQDRVLAVVRGSATNSDGRSNGMTAPNALAQRDVITSALKLADVTPDSVNYVETHGTGTVLGDPIEFESLAATYGLGKGQGESPCALGSVKTNIGHLEAAAGVAGFIKAVLAVQRGHIPRNLHFTRWNPAIDASATRLFVPTESAPWPAAAGPRRAAVSSFGLSGTNAHVVVEQAPDTAVAAAGGMPYVSALNVSGKTAARVASAAAVLADWMSGPGAAAPLADVAHTLNRHRARHAKFATVIARDRAEAIAGLRALAAGQPRVGVVDCDQHAGGPGRVFVYSGQGSQWASMGQQLLANEPAFAKAVAELDPIFVDQVGFSLQQTLIDGDEVVGIDRIQPVLVGMQLALTELWRSYGVIPDAVIGHSMGEVSAAVVAGALTPEQGLRVITTRSRLMARLSGQGAMALLELDADAAEALIAGYPQVTLAVHASPRQTVIAGPPEQVDTVIAAVATQNRLARRVEVDVASHHPIIDPILPELRSALADLTPQPPSIPIISTTYESAQPVADADYWSANLRNPVRFHQAVTAAGVDHNTFIEISPHPVLTHALTDTLDPDGSHTVMSTMNRELDQTLYFHAQLAAVGVAASEHTTGRLVDLPPTPWHHQRFWVTDRSAMSELAATHPLLGAHIEMPRNGDHVWQTDVGTEVCPWLADHKVFGQPIMPAAGFAEIALAAASEALGTAADAVAPNIVINQFEVEQMLPLDGHTPLTTQLIRGGDSQIRVEIYSRTRGGEFCRHATAKVEQSPRECAHAHPEAQGPATGTTVSPADFYALLRQTGQHHGPAFAALSRIVRLADGSAETEISIPDEAPRHPGYRLHPVVLDAALQSVGAAIPDGEIAGSAEASYLPVSFETIRVYRDIGRHVRCRAHLTNLDGGTGKMGRIVLINDAGHIAAEVDGIYLRRVERRAVPLPLEQKIFDAEWTESPIAAVPAPEPAAETTRGSWLVLADATVDAPGKAQAKSMADDFVQQWRSPMRRVHTADIHDESAVLAAFAETAGDPEHPPVGVVVFVGGASSRLDDELAAARDTVWSITTVVRAVVGTWHGRSPRLWLVTGGGLSVADDEPGTPAAASLKGLVRVLAFEHPDMRTTLVDLDITQDPLTALSAELRNAGSGSRHDDVIAWRGERRFVERLSRATIDVSKGHPVVRQGASYVVTGGLGGLGLVVARWLVDRGAGRVVLGGRSDPTDEQCNVLAELQTRAEIVVVRGDVASPGVAEKLIETARQSGGQLRGVVHAAAVIEDSLVFSMSRDNLERVWAPKATGALRMHEATADCELDWWLGFSSAASLLGSPGQAAYACASAWLDALVGWRRASGLPAAVINWGPWSEVGVAQALVGSVLDTISVAEGIEALDSLLAADRIRTGVARLRADRALVAFPEIRSISYFTQVVEELDSAGDLGDWGGPDALADLDPGEARRAVTERMCARIAAVMGYTDQSTVEPAVPLDKPLTELGLDSLMAVRIRNGARADFGVEPPVALILQGASLHDLTADLMRQLGLNDPDPALNNADTIRDRARQRAAARHGAAMRRRPKPEVQGG</sequence>
<reference key="1">
    <citation type="journal article" date="2002" name="J. Bacteriol.">
        <title>Whole-genome comparison of Mycobacterium tuberculosis clinical and laboratory strains.</title>
        <authorList>
            <person name="Fleischmann R.D."/>
            <person name="Alland D."/>
            <person name="Eisen J.A."/>
            <person name="Carpenter L."/>
            <person name="White O."/>
            <person name="Peterson J.D."/>
            <person name="DeBoy R.T."/>
            <person name="Dodson R.J."/>
            <person name="Gwinn M.L."/>
            <person name="Haft D.H."/>
            <person name="Hickey E.K."/>
            <person name="Kolonay J.F."/>
            <person name="Nelson W.C."/>
            <person name="Umayam L.A."/>
            <person name="Ermolaeva M.D."/>
            <person name="Salzberg S.L."/>
            <person name="Delcher A."/>
            <person name="Utterback T.R."/>
            <person name="Weidman J.F."/>
            <person name="Khouri H.M."/>
            <person name="Gill J."/>
            <person name="Mikula A."/>
            <person name="Bishai W."/>
            <person name="Jacobs W.R. Jr."/>
            <person name="Venter J.C."/>
            <person name="Fraser C.M."/>
        </authorList>
    </citation>
    <scope>NUCLEOTIDE SEQUENCE [LARGE SCALE GENOMIC DNA]</scope>
    <source>
        <strain>CDC 1551 / Oshkosh</strain>
    </source>
</reference>
<name>PPSD_MYCTO</name>
<comment type="function">
    <text evidence="2">Part of the PpsABCDE complex involved in the biosynthesis of the lipid core common to phthiocerols and phenolphthiocerols by successive additions of malonyl-CoA or methylmalonyl-CoA extender units. PpsA can accept as substrate the activated forms of either icosanoyl (C20), docosanoyl (C22) or lignoceroyl (C24) groups from FadD26, or a (4-hydroxyphenyl)-C17 or (4-hydroxyphenyl)-C19 fatty acyl from FadD29. PpsA initiates the biosynthesis and extends its substrate using a malonyl-CoA extender unit. The PpsB and PpsC proteins add the second and third malonyl-CoA extender units. PpsD adds an (R)-methylmalonyl unit and PpsE adds a second (R)-methylmalonyl unit. The incorporation of the methylmalonyl units results in formation of two branched methyl groups in the elongated product.</text>
</comment>
<comment type="catalytic activity">
    <reaction evidence="2">
        <text>icosanoyl-[(phenol)carboxyphthiodiolenone synthase] + 2 (S)-methylmalonyl-CoA + 3 malonyl-CoA + 5 NADPH + 10 H(+) = C32-carboxyphthiodiolenone-[(phenol)carboxyphthiodiolenone synthase] + 5 CO2 + 5 NADP(+) + 5 CoA + 2 H2O</text>
        <dbReference type="Rhea" id="RHEA:57748"/>
        <dbReference type="Rhea" id="RHEA-COMP:14985"/>
        <dbReference type="Rhea" id="RHEA-COMP:14986"/>
        <dbReference type="ChEBI" id="CHEBI:15377"/>
        <dbReference type="ChEBI" id="CHEBI:15378"/>
        <dbReference type="ChEBI" id="CHEBI:16526"/>
        <dbReference type="ChEBI" id="CHEBI:57287"/>
        <dbReference type="ChEBI" id="CHEBI:57327"/>
        <dbReference type="ChEBI" id="CHEBI:57384"/>
        <dbReference type="ChEBI" id="CHEBI:57783"/>
        <dbReference type="ChEBI" id="CHEBI:58349"/>
        <dbReference type="ChEBI" id="CHEBI:87848"/>
        <dbReference type="ChEBI" id="CHEBI:142236"/>
        <dbReference type="EC" id="2.3.1.292"/>
    </reaction>
</comment>
<comment type="catalytic activity">
    <reaction evidence="2">
        <text>docosanoyl-[(phenol)carboxyphthiodiolenone synthase] + 2 (S)-methylmalonyl-CoA + 3 malonyl-CoA + 5 NADPH + 10 H(+) = C34-carboxyphthiodiolenone-[(phenol)carboxyphthiodiolenone synthase] + 5 CO2 + 5 NADP(+) + 5 CoA + 2 H2O</text>
        <dbReference type="Rhea" id="RHEA:57752"/>
        <dbReference type="Rhea" id="RHEA-COMP:14987"/>
        <dbReference type="Rhea" id="RHEA-COMP:14988"/>
        <dbReference type="ChEBI" id="CHEBI:15377"/>
        <dbReference type="ChEBI" id="CHEBI:15378"/>
        <dbReference type="ChEBI" id="CHEBI:16526"/>
        <dbReference type="ChEBI" id="CHEBI:57287"/>
        <dbReference type="ChEBI" id="CHEBI:57327"/>
        <dbReference type="ChEBI" id="CHEBI:57384"/>
        <dbReference type="ChEBI" id="CHEBI:57783"/>
        <dbReference type="ChEBI" id="CHEBI:58349"/>
        <dbReference type="ChEBI" id="CHEBI:142237"/>
        <dbReference type="ChEBI" id="CHEBI:142238"/>
        <dbReference type="EC" id="2.3.1.292"/>
    </reaction>
</comment>
<comment type="catalytic activity">
    <reaction evidence="2">
        <text>17-(4-hydroxyphenyl)heptadecanoyl-[(phenol)carboxyphthiodiolenone synthase] + 2 (S)-methylmalonyl-CoA + 3 malonyl-CoA + 5 NADPH + 10 H(+) = C35-(phenol)carboxyphthiodiolenone-[(phenol)carboxyphthiodiolenone synthase] + 5 CO2 + 5 NADP(+) + 5 CoA + 2 H2O</text>
        <dbReference type="Rhea" id="RHEA:57756"/>
        <dbReference type="Rhea" id="RHEA-COMP:14272"/>
        <dbReference type="Rhea" id="RHEA-COMP:14989"/>
        <dbReference type="ChEBI" id="CHEBI:15377"/>
        <dbReference type="ChEBI" id="CHEBI:15378"/>
        <dbReference type="ChEBI" id="CHEBI:16526"/>
        <dbReference type="ChEBI" id="CHEBI:57287"/>
        <dbReference type="ChEBI" id="CHEBI:57327"/>
        <dbReference type="ChEBI" id="CHEBI:57384"/>
        <dbReference type="ChEBI" id="CHEBI:57783"/>
        <dbReference type="ChEBI" id="CHEBI:58349"/>
        <dbReference type="ChEBI" id="CHEBI:133300"/>
        <dbReference type="ChEBI" id="CHEBI:142259"/>
        <dbReference type="EC" id="2.3.1.292"/>
    </reaction>
</comment>
<comment type="catalytic activity">
    <reaction evidence="2">
        <text>19-(4-hydroxyphenyl)nonadecanoyl-[(phenol)carboxyphthiodiolenone synthase] + 2 (S)-methylmalonyl-CoA + 3 malonyl-CoA + 5 NADPH + 10 H(+) = C37-(phenol)carboxyphthiodiolenone-[(phenol)carboxyphthiodiolenone synthase] + 5 CO2 + 5 NADP(+) + 5 CoA + 2 H2O</text>
        <dbReference type="Rhea" id="RHEA:57760"/>
        <dbReference type="Rhea" id="RHEA-COMP:14273"/>
        <dbReference type="Rhea" id="RHEA-COMP:14990"/>
        <dbReference type="ChEBI" id="CHEBI:15377"/>
        <dbReference type="ChEBI" id="CHEBI:15378"/>
        <dbReference type="ChEBI" id="CHEBI:16526"/>
        <dbReference type="ChEBI" id="CHEBI:57287"/>
        <dbReference type="ChEBI" id="CHEBI:57327"/>
        <dbReference type="ChEBI" id="CHEBI:57384"/>
        <dbReference type="ChEBI" id="CHEBI:57783"/>
        <dbReference type="ChEBI" id="CHEBI:58349"/>
        <dbReference type="ChEBI" id="CHEBI:133301"/>
        <dbReference type="ChEBI" id="CHEBI:142260"/>
        <dbReference type="EC" id="2.3.1.292"/>
    </reaction>
</comment>
<comment type="cofactor">
    <cofactor evidence="2">
        <name>NADP(+)</name>
        <dbReference type="ChEBI" id="CHEBI:58349"/>
    </cofactor>
</comment>
<comment type="cofactor">
    <cofactor evidence="1">
        <name>pantetheine 4'-phosphate</name>
        <dbReference type="ChEBI" id="CHEBI:47942"/>
    </cofactor>
    <text evidence="1">Binds 1 phosphopantetheine covalently.</text>
</comment>
<comment type="pathway">
    <text evidence="2">Lipid metabolism; fatty acid biosynthesis.</text>
</comment>
<evidence type="ECO:0000250" key="1"/>
<evidence type="ECO:0000250" key="2">
    <source>
        <dbReference type="UniProtKB" id="P9WQE3"/>
    </source>
</evidence>
<evidence type="ECO:0000255" key="3">
    <source>
        <dbReference type="PROSITE-ProRule" id="PRU00258"/>
    </source>
</evidence>
<evidence type="ECO:0000255" key="4">
    <source>
        <dbReference type="PROSITE-ProRule" id="PRU01348"/>
    </source>
</evidence>
<evidence type="ECO:0000255" key="5">
    <source>
        <dbReference type="PROSITE-ProRule" id="PRU01363"/>
    </source>
</evidence>
<evidence type="ECO:0000255" key="6">
    <source>
        <dbReference type="PROSITE-ProRule" id="PRU10022"/>
    </source>
</evidence>
<evidence type="ECO:0000256" key="7">
    <source>
        <dbReference type="SAM" id="MobiDB-lite"/>
    </source>
</evidence>
<evidence type="ECO:0000305" key="8"/>